<keyword id="KW-0963">Cytoplasm</keyword>
<keyword id="KW-0238">DNA-binding</keyword>
<keyword id="KW-1185">Reference proteome</keyword>
<keyword id="KW-0804">Transcription</keyword>
<keyword id="KW-0805">Transcription regulation</keyword>
<protein>
    <recommendedName>
        <fullName evidence="1">Probable transcriptional regulatory protein Rcas_0718</fullName>
    </recommendedName>
</protein>
<dbReference type="EMBL" id="CP000804">
    <property type="protein sequence ID" value="ABU56839.1"/>
    <property type="molecule type" value="Genomic_DNA"/>
</dbReference>
<dbReference type="RefSeq" id="WP_012119269.1">
    <property type="nucleotide sequence ID" value="NC_009767.1"/>
</dbReference>
<dbReference type="SMR" id="A7NH92"/>
<dbReference type="STRING" id="383372.Rcas_0718"/>
<dbReference type="KEGG" id="rca:Rcas_0718"/>
<dbReference type="eggNOG" id="COG0217">
    <property type="taxonomic scope" value="Bacteria"/>
</dbReference>
<dbReference type="HOGENOM" id="CLU_062974_1_0_0"/>
<dbReference type="OrthoDB" id="9781053at2"/>
<dbReference type="Proteomes" id="UP000000263">
    <property type="component" value="Chromosome"/>
</dbReference>
<dbReference type="GO" id="GO:0005829">
    <property type="term" value="C:cytosol"/>
    <property type="evidence" value="ECO:0007669"/>
    <property type="project" value="TreeGrafter"/>
</dbReference>
<dbReference type="GO" id="GO:0003677">
    <property type="term" value="F:DNA binding"/>
    <property type="evidence" value="ECO:0007669"/>
    <property type="project" value="UniProtKB-UniRule"/>
</dbReference>
<dbReference type="GO" id="GO:0006355">
    <property type="term" value="P:regulation of DNA-templated transcription"/>
    <property type="evidence" value="ECO:0007669"/>
    <property type="project" value="UniProtKB-UniRule"/>
</dbReference>
<dbReference type="FunFam" id="1.10.10.200:FF:000002">
    <property type="entry name" value="Probable transcriptional regulatory protein CLM62_37755"/>
    <property type="match status" value="1"/>
</dbReference>
<dbReference type="Gene3D" id="1.10.10.200">
    <property type="match status" value="1"/>
</dbReference>
<dbReference type="Gene3D" id="3.30.70.980">
    <property type="match status" value="2"/>
</dbReference>
<dbReference type="HAMAP" id="MF_00693">
    <property type="entry name" value="Transcrip_reg_TACO1"/>
    <property type="match status" value="1"/>
</dbReference>
<dbReference type="InterPro" id="IPR017856">
    <property type="entry name" value="Integrase-like_N"/>
</dbReference>
<dbReference type="InterPro" id="IPR048300">
    <property type="entry name" value="TACO1_YebC-like_2nd/3rd_dom"/>
</dbReference>
<dbReference type="InterPro" id="IPR049083">
    <property type="entry name" value="TACO1_YebC_N"/>
</dbReference>
<dbReference type="InterPro" id="IPR002876">
    <property type="entry name" value="Transcrip_reg_TACO1-like"/>
</dbReference>
<dbReference type="InterPro" id="IPR026564">
    <property type="entry name" value="Transcrip_reg_TACO1-like_dom3"/>
</dbReference>
<dbReference type="InterPro" id="IPR029072">
    <property type="entry name" value="YebC-like"/>
</dbReference>
<dbReference type="NCBIfam" id="NF001030">
    <property type="entry name" value="PRK00110.1"/>
    <property type="match status" value="1"/>
</dbReference>
<dbReference type="NCBIfam" id="NF009044">
    <property type="entry name" value="PRK12378.1"/>
    <property type="match status" value="1"/>
</dbReference>
<dbReference type="NCBIfam" id="TIGR01033">
    <property type="entry name" value="YebC/PmpR family DNA-binding transcriptional regulator"/>
    <property type="match status" value="1"/>
</dbReference>
<dbReference type="PANTHER" id="PTHR12532:SF6">
    <property type="entry name" value="TRANSCRIPTIONAL REGULATORY PROTEIN YEBC-RELATED"/>
    <property type="match status" value="1"/>
</dbReference>
<dbReference type="PANTHER" id="PTHR12532">
    <property type="entry name" value="TRANSLATIONAL ACTIVATOR OF CYTOCHROME C OXIDASE 1"/>
    <property type="match status" value="1"/>
</dbReference>
<dbReference type="Pfam" id="PF20772">
    <property type="entry name" value="TACO1_YebC_N"/>
    <property type="match status" value="1"/>
</dbReference>
<dbReference type="Pfam" id="PF01709">
    <property type="entry name" value="Transcrip_reg"/>
    <property type="match status" value="1"/>
</dbReference>
<dbReference type="SUPFAM" id="SSF75625">
    <property type="entry name" value="YebC-like"/>
    <property type="match status" value="1"/>
</dbReference>
<comment type="subcellular location">
    <subcellularLocation>
        <location evidence="1">Cytoplasm</location>
    </subcellularLocation>
</comment>
<comment type="similarity">
    <text evidence="1">Belongs to the TACO1 family.</text>
</comment>
<name>Y718_ROSCS</name>
<reference key="1">
    <citation type="submission" date="2007-08" db="EMBL/GenBank/DDBJ databases">
        <title>Complete sequence of Roseiflexus castenholzii DSM 13941.</title>
        <authorList>
            <consortium name="US DOE Joint Genome Institute"/>
            <person name="Copeland A."/>
            <person name="Lucas S."/>
            <person name="Lapidus A."/>
            <person name="Barry K."/>
            <person name="Glavina del Rio T."/>
            <person name="Dalin E."/>
            <person name="Tice H."/>
            <person name="Pitluck S."/>
            <person name="Thompson L.S."/>
            <person name="Brettin T."/>
            <person name="Bruce D."/>
            <person name="Detter J.C."/>
            <person name="Han C."/>
            <person name="Tapia R."/>
            <person name="Schmutz J."/>
            <person name="Larimer F."/>
            <person name="Land M."/>
            <person name="Hauser L."/>
            <person name="Kyrpides N."/>
            <person name="Mikhailova N."/>
            <person name="Bryant D.A."/>
            <person name="Hanada S."/>
            <person name="Tsukatani Y."/>
            <person name="Richardson P."/>
        </authorList>
    </citation>
    <scope>NUCLEOTIDE SEQUENCE [LARGE SCALE GENOMIC DNA]</scope>
    <source>
        <strain>DSM 13941 / HLO8</strain>
    </source>
</reference>
<proteinExistence type="inferred from homology"/>
<evidence type="ECO:0000255" key="1">
    <source>
        <dbReference type="HAMAP-Rule" id="MF_00693"/>
    </source>
</evidence>
<accession>A7NH92</accession>
<gene>
    <name type="ordered locus">Rcas_0718</name>
</gene>
<sequence>MSGHSKWHSIRRTKGVLDQRRGQLFTKLARDITIATREGGSGDPEANFRLRLAVDKARAANMPMDNIQRAIDRGLGRGGSDAAALEEIYYEGYAPGGVALLIEAATDNRNRTASDVRATMTKNGGSPGEPGSVSWMFETRGLITIDLSVKRLDPDEVMLIAIDAGAEDVQIEDDIVEVYTDFKQLAAVRQQLIAAGLPVTGAEKTMIAKTTVQPDTADALKAMRLIEKLEDLDDVQKVYSNLEITSELAEQFVSG</sequence>
<organism>
    <name type="scientific">Roseiflexus castenholzii (strain DSM 13941 / HLO8)</name>
    <dbReference type="NCBI Taxonomy" id="383372"/>
    <lineage>
        <taxon>Bacteria</taxon>
        <taxon>Bacillati</taxon>
        <taxon>Chloroflexota</taxon>
        <taxon>Chloroflexia</taxon>
        <taxon>Chloroflexales</taxon>
        <taxon>Roseiflexineae</taxon>
        <taxon>Roseiflexaceae</taxon>
        <taxon>Roseiflexus</taxon>
    </lineage>
</organism>
<feature type="chain" id="PRO_1000083167" description="Probable transcriptional regulatory protein Rcas_0718">
    <location>
        <begin position="1"/>
        <end position="255"/>
    </location>
</feature>